<reference key="1">
    <citation type="journal article" date="2004" name="Nucleic Acids Res.">
        <title>Whole genome comparisons of serotype 4b and 1/2a strains of the food-borne pathogen Listeria monocytogenes reveal new insights into the core genome components of this species.</title>
        <authorList>
            <person name="Nelson K.E."/>
            <person name="Fouts D.E."/>
            <person name="Mongodin E.F."/>
            <person name="Ravel J."/>
            <person name="DeBoy R.T."/>
            <person name="Kolonay J.F."/>
            <person name="Rasko D.A."/>
            <person name="Angiuoli S.V."/>
            <person name="Gill S.R."/>
            <person name="Paulsen I.T."/>
            <person name="Peterson J.D."/>
            <person name="White O."/>
            <person name="Nelson W.C."/>
            <person name="Nierman W.C."/>
            <person name="Beanan M.J."/>
            <person name="Brinkac L.M."/>
            <person name="Daugherty S.C."/>
            <person name="Dodson R.J."/>
            <person name="Durkin A.S."/>
            <person name="Madupu R."/>
            <person name="Haft D.H."/>
            <person name="Selengut J."/>
            <person name="Van Aken S.E."/>
            <person name="Khouri H.M."/>
            <person name="Fedorova N."/>
            <person name="Forberger H.A."/>
            <person name="Tran B."/>
            <person name="Kathariou S."/>
            <person name="Wonderling L.D."/>
            <person name="Uhlich G.A."/>
            <person name="Bayles D.O."/>
            <person name="Luchansky J.B."/>
            <person name="Fraser C.M."/>
        </authorList>
    </citation>
    <scope>NUCLEOTIDE SEQUENCE [LARGE SCALE GENOMIC DNA]</scope>
    <source>
        <strain>F2365</strain>
    </source>
</reference>
<dbReference type="EC" id="7.4.2.8" evidence="1"/>
<dbReference type="EMBL" id="AE017262">
    <property type="protein sequence ID" value="AAT03394.1"/>
    <property type="molecule type" value="Genomic_DNA"/>
</dbReference>
<dbReference type="RefSeq" id="WP_003725893.1">
    <property type="nucleotide sequence ID" value="NC_002973.6"/>
</dbReference>
<dbReference type="SMR" id="Q722W7"/>
<dbReference type="KEGG" id="lmf:LMOf2365_0612"/>
<dbReference type="HOGENOM" id="CLU_005314_3_0_9"/>
<dbReference type="GO" id="GO:0031522">
    <property type="term" value="C:cell envelope Sec protein transport complex"/>
    <property type="evidence" value="ECO:0007669"/>
    <property type="project" value="TreeGrafter"/>
</dbReference>
<dbReference type="GO" id="GO:0005829">
    <property type="term" value="C:cytosol"/>
    <property type="evidence" value="ECO:0007669"/>
    <property type="project" value="TreeGrafter"/>
</dbReference>
<dbReference type="GO" id="GO:0005886">
    <property type="term" value="C:plasma membrane"/>
    <property type="evidence" value="ECO:0007669"/>
    <property type="project" value="UniProtKB-SubCell"/>
</dbReference>
<dbReference type="GO" id="GO:0005524">
    <property type="term" value="F:ATP binding"/>
    <property type="evidence" value="ECO:0007669"/>
    <property type="project" value="UniProtKB-UniRule"/>
</dbReference>
<dbReference type="GO" id="GO:0008564">
    <property type="term" value="F:protein-exporting ATPase activity"/>
    <property type="evidence" value="ECO:0007669"/>
    <property type="project" value="UniProtKB-EC"/>
</dbReference>
<dbReference type="GO" id="GO:0065002">
    <property type="term" value="P:intracellular protein transmembrane transport"/>
    <property type="evidence" value="ECO:0007669"/>
    <property type="project" value="UniProtKB-UniRule"/>
</dbReference>
<dbReference type="GO" id="GO:0017038">
    <property type="term" value="P:protein import"/>
    <property type="evidence" value="ECO:0007669"/>
    <property type="project" value="InterPro"/>
</dbReference>
<dbReference type="GO" id="GO:0006605">
    <property type="term" value="P:protein targeting"/>
    <property type="evidence" value="ECO:0007669"/>
    <property type="project" value="UniProtKB-UniRule"/>
</dbReference>
<dbReference type="GO" id="GO:0043952">
    <property type="term" value="P:protein transport by the Sec complex"/>
    <property type="evidence" value="ECO:0007669"/>
    <property type="project" value="TreeGrafter"/>
</dbReference>
<dbReference type="CDD" id="cd17928">
    <property type="entry name" value="DEXDc_SecA"/>
    <property type="match status" value="1"/>
</dbReference>
<dbReference type="CDD" id="cd18803">
    <property type="entry name" value="SF2_C_secA"/>
    <property type="match status" value="1"/>
</dbReference>
<dbReference type="FunFam" id="3.40.50.300:FF:000429">
    <property type="entry name" value="Preprotein translocase subunit SecA"/>
    <property type="match status" value="1"/>
</dbReference>
<dbReference type="FunFam" id="1.10.3060.10:FF:000009">
    <property type="entry name" value="Protein translocase subunit SecA 2"/>
    <property type="match status" value="1"/>
</dbReference>
<dbReference type="Gene3D" id="1.10.3060.10">
    <property type="entry name" value="Helical scaffold and wing domains of SecA"/>
    <property type="match status" value="1"/>
</dbReference>
<dbReference type="Gene3D" id="3.40.50.300">
    <property type="entry name" value="P-loop containing nucleotide triphosphate hydrolases"/>
    <property type="match status" value="3"/>
</dbReference>
<dbReference type="Gene3D" id="3.90.1440.10">
    <property type="entry name" value="SecA, preprotein cross-linking domain"/>
    <property type="match status" value="1"/>
</dbReference>
<dbReference type="HAMAP" id="MF_01382">
    <property type="entry name" value="SecA"/>
    <property type="match status" value="1"/>
</dbReference>
<dbReference type="InterPro" id="IPR014001">
    <property type="entry name" value="Helicase_ATP-bd"/>
</dbReference>
<dbReference type="InterPro" id="IPR001650">
    <property type="entry name" value="Helicase_C-like"/>
</dbReference>
<dbReference type="InterPro" id="IPR027417">
    <property type="entry name" value="P-loop_NTPase"/>
</dbReference>
<dbReference type="InterPro" id="IPR000185">
    <property type="entry name" value="SecA"/>
</dbReference>
<dbReference type="InterPro" id="IPR011115">
    <property type="entry name" value="SecA_DEAD"/>
</dbReference>
<dbReference type="InterPro" id="IPR014018">
    <property type="entry name" value="SecA_motor_DEAD"/>
</dbReference>
<dbReference type="InterPro" id="IPR011130">
    <property type="entry name" value="SecA_preprotein_X-link_dom"/>
</dbReference>
<dbReference type="InterPro" id="IPR044722">
    <property type="entry name" value="SecA_SF2_C"/>
</dbReference>
<dbReference type="InterPro" id="IPR011116">
    <property type="entry name" value="SecA_Wing/Scaffold"/>
</dbReference>
<dbReference type="InterPro" id="IPR036266">
    <property type="entry name" value="SecA_Wing/Scaffold_sf"/>
</dbReference>
<dbReference type="InterPro" id="IPR036670">
    <property type="entry name" value="SecA_X-link_sf"/>
</dbReference>
<dbReference type="NCBIfam" id="NF006630">
    <property type="entry name" value="PRK09200.1"/>
    <property type="match status" value="1"/>
</dbReference>
<dbReference type="NCBIfam" id="NF012136">
    <property type="entry name" value="SecA2_Lm"/>
    <property type="match status" value="1"/>
</dbReference>
<dbReference type="PANTHER" id="PTHR30612:SF0">
    <property type="entry name" value="CHLOROPLAST PROTEIN-TRANSPORTING ATPASE"/>
    <property type="match status" value="1"/>
</dbReference>
<dbReference type="PANTHER" id="PTHR30612">
    <property type="entry name" value="SECA INNER MEMBRANE COMPONENT OF SEC PROTEIN SECRETION SYSTEM"/>
    <property type="match status" value="1"/>
</dbReference>
<dbReference type="Pfam" id="PF21090">
    <property type="entry name" value="P-loop_SecA"/>
    <property type="match status" value="1"/>
</dbReference>
<dbReference type="Pfam" id="PF07517">
    <property type="entry name" value="SecA_DEAD"/>
    <property type="match status" value="1"/>
</dbReference>
<dbReference type="Pfam" id="PF01043">
    <property type="entry name" value="SecA_PP_bind"/>
    <property type="match status" value="1"/>
</dbReference>
<dbReference type="Pfam" id="PF07516">
    <property type="entry name" value="SecA_SW"/>
    <property type="match status" value="1"/>
</dbReference>
<dbReference type="PRINTS" id="PR00906">
    <property type="entry name" value="SECA"/>
</dbReference>
<dbReference type="SMART" id="SM00957">
    <property type="entry name" value="SecA_DEAD"/>
    <property type="match status" value="1"/>
</dbReference>
<dbReference type="SMART" id="SM00958">
    <property type="entry name" value="SecA_PP_bind"/>
    <property type="match status" value="1"/>
</dbReference>
<dbReference type="SUPFAM" id="SSF81886">
    <property type="entry name" value="Helical scaffold and wing domains of SecA"/>
    <property type="match status" value="1"/>
</dbReference>
<dbReference type="SUPFAM" id="SSF52540">
    <property type="entry name" value="P-loop containing nucleoside triphosphate hydrolases"/>
    <property type="match status" value="2"/>
</dbReference>
<dbReference type="SUPFAM" id="SSF81767">
    <property type="entry name" value="Pre-protein crosslinking domain of SecA"/>
    <property type="match status" value="1"/>
</dbReference>
<dbReference type="PROSITE" id="PS51196">
    <property type="entry name" value="SECA_MOTOR_DEAD"/>
    <property type="match status" value="1"/>
</dbReference>
<organism>
    <name type="scientific">Listeria monocytogenes serotype 4b (strain F2365)</name>
    <dbReference type="NCBI Taxonomy" id="265669"/>
    <lineage>
        <taxon>Bacteria</taxon>
        <taxon>Bacillati</taxon>
        <taxon>Bacillota</taxon>
        <taxon>Bacilli</taxon>
        <taxon>Bacillales</taxon>
        <taxon>Listeriaceae</taxon>
        <taxon>Listeria</taxon>
    </lineage>
</organism>
<sequence length="776" mass="89436">MRQNYDDRKIVKQYREIARQIVKKEGLYKNMDQAELCEQTNFWREKFKTKPMTDRDKINIFALAREAASRIIGLDAVVVQLIGALVLGDGKVAEMKTGEGKTLMSLFVMFIEVMRGNRVHLVTANEYLARRDREEIGQVLEYLGVSVALNESGLDIAQKKAIYTADVIYGTASEFGFDYLRDNMVRQKEDKVQSGLDFVLIDEADSILIDEARTPLLISDRKEEDLSLYHTANKLVKKMMKDDYEMEEHKRFVWLNDAGIEKAQKFWGVESLYSAEAQSELRITMLLMRAHFLMHKDKDYVVLDDEVLIIDPHTGRALPGRRFNDGLHQAIEAKEGVEVKEESRTLATITIQNYFRMYKKISGMTGTAKTEEEEFRQIYNMDVVVIPTNLRVNREDMQDDIFYTKKEKGRAIVYEVSWRYEKGQPTLIGTSSIKSNEWISGLLDAAGIPHQVLNAKNHAQEAEIIAKAGKRGMVTLATNMAGRGTDIKLDPDVHKLGGLAVIGTERHESRRIDLQLMGRSGRRGDPGFSKFMISLEDDLLEQFESKSWEKLSTKLKRKAPRDGKPVNSRKIHAVVVDAQKRLEGANYDIRKDLLSYDEVIDLQRKMVYKERDLLLERNKLGVSSEKILREVAEYSFIHPSDIPEEELEIYYSRQKELLGGTKFPISFDQVTLMDPREVVEEIVSWHKKERNKFPAETIAAIEREVYLNLMDQMWVMHLDAMVQLREGIHLRAYGQQDPLVMYQKEGAQLFEKFQADYHFYFAHALLELDPDGLIQG</sequence>
<evidence type="ECO:0000255" key="1">
    <source>
        <dbReference type="HAMAP-Rule" id="MF_01382"/>
    </source>
</evidence>
<protein>
    <recommendedName>
        <fullName evidence="1">Protein translocase subunit SecA 2</fullName>
        <ecNumber evidence="1">7.4.2.8</ecNumber>
    </recommendedName>
</protein>
<name>SECA2_LISMF</name>
<keyword id="KW-0067">ATP-binding</keyword>
<keyword id="KW-1003">Cell membrane</keyword>
<keyword id="KW-0963">Cytoplasm</keyword>
<keyword id="KW-0472">Membrane</keyword>
<keyword id="KW-0547">Nucleotide-binding</keyword>
<keyword id="KW-0653">Protein transport</keyword>
<keyword id="KW-1278">Translocase</keyword>
<keyword id="KW-0811">Translocation</keyword>
<keyword id="KW-0813">Transport</keyword>
<accession>Q722W7</accession>
<gene>
    <name evidence="1" type="primary">secA2</name>
    <name type="ordered locus">LMOf2365_0612</name>
</gene>
<proteinExistence type="inferred from homology"/>
<feature type="chain" id="PRO_0000318368" description="Protein translocase subunit SecA 2">
    <location>
        <begin position="1"/>
        <end position="776"/>
    </location>
</feature>
<feature type="binding site" evidence="1">
    <location>
        <position position="80"/>
    </location>
    <ligand>
        <name>ATP</name>
        <dbReference type="ChEBI" id="CHEBI:30616"/>
    </ligand>
</feature>
<feature type="binding site" evidence="1">
    <location>
        <begin position="98"/>
        <end position="102"/>
    </location>
    <ligand>
        <name>ATP</name>
        <dbReference type="ChEBI" id="CHEBI:30616"/>
    </ligand>
</feature>
<feature type="binding site" evidence="1">
    <location>
        <position position="486"/>
    </location>
    <ligand>
        <name>ATP</name>
        <dbReference type="ChEBI" id="CHEBI:30616"/>
    </ligand>
</feature>
<comment type="function">
    <text evidence="1">Part of the Sec protein translocase complex. Interacts with the SecYEG preprotein conducting channel. Has a central role in coupling the hydrolysis of ATP to the transfer of proteins into and across the cell membrane, serving as an ATP-driven molecular motor driving the stepwise translocation of polypeptide chains across the membrane.</text>
</comment>
<comment type="catalytic activity">
    <reaction evidence="1">
        <text>ATP + H2O + cellular proteinSide 1 = ADP + phosphate + cellular proteinSide 2.</text>
        <dbReference type="EC" id="7.4.2.8"/>
    </reaction>
</comment>
<comment type="subunit">
    <text evidence="1">Monomer and homodimer. Part of the essential Sec protein translocation apparatus which comprises SecA, SecYEG and auxiliary proteins SecDF. Other proteins may also be involved.</text>
</comment>
<comment type="subcellular location">
    <subcellularLocation>
        <location evidence="1">Cell membrane</location>
        <topology evidence="1">Peripheral membrane protein</topology>
        <orientation evidence="1">Cytoplasmic side</orientation>
    </subcellularLocation>
    <subcellularLocation>
        <location evidence="1">Cytoplasm</location>
    </subcellularLocation>
    <text evidence="1">Distribution is 50-50.</text>
</comment>
<comment type="similarity">
    <text evidence="1">Belongs to the SecA family.</text>
</comment>